<feature type="chain" id="PRO_0000332397" description="Cobyric acid synthase">
    <location>
        <begin position="1"/>
        <end position="494"/>
    </location>
</feature>
<feature type="domain" description="GATase cobBQ-type" evidence="1">
    <location>
        <begin position="248"/>
        <end position="445"/>
    </location>
</feature>
<feature type="active site" description="Nucleophile" evidence="1">
    <location>
        <position position="329"/>
    </location>
</feature>
<feature type="active site" evidence="1">
    <location>
        <position position="437"/>
    </location>
</feature>
<reference key="1">
    <citation type="submission" date="2006-05" db="EMBL/GenBank/DDBJ databases">
        <authorList>
            <consortium name="Genoscope"/>
        </authorList>
    </citation>
    <scope>NUCLEOTIDE SEQUENCE [LARGE SCALE GENOMIC DNA]</scope>
    <source>
        <strain>WH7803</strain>
    </source>
</reference>
<proteinExistence type="inferred from homology"/>
<dbReference type="EMBL" id="CT971583">
    <property type="protein sequence ID" value="CAK24084.1"/>
    <property type="molecule type" value="Genomic_DNA"/>
</dbReference>
<dbReference type="SMR" id="A5GMB9"/>
<dbReference type="STRING" id="32051.SynWH7803_1658"/>
<dbReference type="KEGG" id="syx:SynWH7803_1658"/>
<dbReference type="eggNOG" id="COG1492">
    <property type="taxonomic scope" value="Bacteria"/>
</dbReference>
<dbReference type="HOGENOM" id="CLU_019250_2_2_3"/>
<dbReference type="OrthoDB" id="9808302at2"/>
<dbReference type="UniPathway" id="UPA00148"/>
<dbReference type="Proteomes" id="UP000001566">
    <property type="component" value="Chromosome"/>
</dbReference>
<dbReference type="GO" id="GO:0015420">
    <property type="term" value="F:ABC-type vitamin B12 transporter activity"/>
    <property type="evidence" value="ECO:0007669"/>
    <property type="project" value="UniProtKB-UniRule"/>
</dbReference>
<dbReference type="GO" id="GO:0003824">
    <property type="term" value="F:catalytic activity"/>
    <property type="evidence" value="ECO:0007669"/>
    <property type="project" value="InterPro"/>
</dbReference>
<dbReference type="GO" id="GO:0009236">
    <property type="term" value="P:cobalamin biosynthetic process"/>
    <property type="evidence" value="ECO:0007669"/>
    <property type="project" value="UniProtKB-UniRule"/>
</dbReference>
<dbReference type="CDD" id="cd01750">
    <property type="entry name" value="GATase1_CobQ"/>
    <property type="match status" value="1"/>
</dbReference>
<dbReference type="Gene3D" id="3.40.50.880">
    <property type="match status" value="1"/>
</dbReference>
<dbReference type="Gene3D" id="3.40.50.300">
    <property type="entry name" value="P-loop containing nucleotide triphosphate hydrolases"/>
    <property type="match status" value="1"/>
</dbReference>
<dbReference type="HAMAP" id="MF_00028">
    <property type="entry name" value="CobQ"/>
    <property type="match status" value="1"/>
</dbReference>
<dbReference type="InterPro" id="IPR029062">
    <property type="entry name" value="Class_I_gatase-like"/>
</dbReference>
<dbReference type="InterPro" id="IPR002586">
    <property type="entry name" value="CobQ/CobB/MinD/ParA_Nub-bd_dom"/>
</dbReference>
<dbReference type="InterPro" id="IPR033949">
    <property type="entry name" value="CobQ_GATase1"/>
</dbReference>
<dbReference type="InterPro" id="IPR004459">
    <property type="entry name" value="CobQ_synth"/>
</dbReference>
<dbReference type="InterPro" id="IPR011698">
    <property type="entry name" value="GATase_3"/>
</dbReference>
<dbReference type="InterPro" id="IPR027417">
    <property type="entry name" value="P-loop_NTPase"/>
</dbReference>
<dbReference type="NCBIfam" id="TIGR00313">
    <property type="entry name" value="cobQ"/>
    <property type="match status" value="1"/>
</dbReference>
<dbReference type="NCBIfam" id="NF001989">
    <property type="entry name" value="PRK00784.1"/>
    <property type="match status" value="1"/>
</dbReference>
<dbReference type="PANTHER" id="PTHR21343:SF1">
    <property type="entry name" value="COBYRIC ACID SYNTHASE"/>
    <property type="match status" value="1"/>
</dbReference>
<dbReference type="PANTHER" id="PTHR21343">
    <property type="entry name" value="DETHIOBIOTIN SYNTHETASE"/>
    <property type="match status" value="1"/>
</dbReference>
<dbReference type="Pfam" id="PF01656">
    <property type="entry name" value="CbiA"/>
    <property type="match status" value="1"/>
</dbReference>
<dbReference type="Pfam" id="PF07685">
    <property type="entry name" value="GATase_3"/>
    <property type="match status" value="1"/>
</dbReference>
<dbReference type="SUPFAM" id="SSF52317">
    <property type="entry name" value="Class I glutamine amidotransferase-like"/>
    <property type="match status" value="1"/>
</dbReference>
<dbReference type="SUPFAM" id="SSF52540">
    <property type="entry name" value="P-loop containing nucleoside triphosphate hydrolases"/>
    <property type="match status" value="1"/>
</dbReference>
<dbReference type="PROSITE" id="PS51274">
    <property type="entry name" value="GATASE_COBBQ"/>
    <property type="match status" value="1"/>
</dbReference>
<protein>
    <recommendedName>
        <fullName evidence="1">Cobyric acid synthase</fullName>
    </recommendedName>
</protein>
<organism>
    <name type="scientific">Synechococcus sp. (strain WH7803)</name>
    <dbReference type="NCBI Taxonomy" id="32051"/>
    <lineage>
        <taxon>Bacteria</taxon>
        <taxon>Bacillati</taxon>
        <taxon>Cyanobacteriota</taxon>
        <taxon>Cyanophyceae</taxon>
        <taxon>Synechococcales</taxon>
        <taxon>Synechococcaceae</taxon>
        <taxon>Synechococcus</taxon>
    </lineage>
</organism>
<gene>
    <name evidence="1" type="primary">cobQ</name>
    <name type="ordered locus">SynWH7803_1658</name>
</gene>
<comment type="function">
    <text evidence="1">Catalyzes amidations at positions B, D, E, and G on adenosylcobyrinic A,C-diamide. NH(2) groups are provided by glutamine, and one molecule of ATP is hydrogenolyzed for each amidation.</text>
</comment>
<comment type="pathway">
    <text evidence="1">Cofactor biosynthesis; adenosylcobalamin biosynthesis.</text>
</comment>
<comment type="similarity">
    <text evidence="1">Belongs to the CobB/CobQ family. CobQ subfamily.</text>
</comment>
<accession>A5GMB9</accession>
<name>COBQ_SYNPW</name>
<sequence length="494" mass="54279">MVLGTSSGAGKSLMTAALCRVLKRRGETPLPFKGQNMSNNAWVDPGGGEMAYSQALQAWAAGREPECAMNPVLLKPQGDSTSEVIHLGRSVGTCRAEHYYRDWFRPGWAAIRQGLHTLENENPEGRLVLEGAGSPVEVNLQARDLTNLRLAQYLRARCLLVADIERGGVFAQIVGTLALLRPVERPLISGLLINRFRGRRELFDEGRRWLEQHTGIPVLGVMPWLDELFPPEDSLDLLERRGRKRGAELEIAVLKLPSLSNFSDLDPLEAEPTVQLRWVAPGEPLGTPDAVVIPGSKQTLRDLGRLHSSGLGSAVQRFARSGGAVFGVCGGMQMLGQELEDPEGLEGQAAAGGNGAMTGLGLLPLRTRFGGEKALRHRQSSVHWPEHQPTLSVEGFELHRGHTHALEPCSNLCEDPSLGWVARCGDQGGIAAGTYLHGIFDNGPWRRRWLNQLRIRRGLELLSEQQPHHSRQRDALLDRLADAFETHVNLEPLL</sequence>
<keyword id="KW-0169">Cobalamin biosynthesis</keyword>
<keyword id="KW-0315">Glutamine amidotransferase</keyword>
<keyword id="KW-1185">Reference proteome</keyword>
<evidence type="ECO:0000255" key="1">
    <source>
        <dbReference type="HAMAP-Rule" id="MF_00028"/>
    </source>
</evidence>